<keyword id="KW-0328">Glycosyltransferase</keyword>
<keyword id="KW-0479">Metal-binding</keyword>
<keyword id="KW-0671">Queuosine biosynthesis</keyword>
<keyword id="KW-0808">Transferase</keyword>
<keyword id="KW-0819">tRNA processing</keyword>
<keyword id="KW-0862">Zinc</keyword>
<gene>
    <name evidence="1" type="primary">tgt</name>
    <name type="ordered locus">ECDH10B_0362</name>
</gene>
<sequence length="375" mass="42594">MKFELDTTDGRARRGRLVFDRGVVETPCFMPVGTYGTVKGMTPEEVEATGAQIILGNTFHLWLRPGQEIMKLHGDLHDFMQWKGPILTDSGGFQVFSLGDIRKITEQGVHFRNPINGDPIFLDPEKSMEIQYDLGSDIVMIFDECTPYPADWDYAKRSMEMSLRWAKRSRERFDSLGNKNALFGIIQGSVYEDLRDISVKGLVDIGFDGYAVGGLAVGEPKADMHRILEHVCPQIPADKPRYLMGVGKPEDLVEGVRRGIDMFDCVMPTRNARNGHLFVTDGVVKIRNAKYKSDTGPLDPECDCYTCRNYSRAYLHHLDRCNEILGARLNTIHNLRYYQRLMAGLRKAIEEGKLESFVTDFYQRQGREVPPLNVD</sequence>
<comment type="function">
    <text evidence="1">Catalyzes the base-exchange of a guanine (G) residue with the queuine precursor 7-aminomethyl-7-deazaguanine (PreQ1) at position 34 (anticodon wobble position) in tRNAs with GU(N) anticodons (tRNA-Asp, -Asn, -His and -Tyr). Catalysis occurs through a double-displacement mechanism. The nucleophile active site attacks the C1' of nucleotide 34 to detach the guanine base from the RNA, forming a covalent enzyme-RNA intermediate. The proton acceptor active site deprotonates the incoming PreQ1, allowing a nucleophilic attack on the C1' of the ribose to form the product. After dissociation, two additional enzymatic reactions on the tRNA convert PreQ1 to queuine (Q), resulting in the hypermodified nucleoside queuosine (7-(((4,5-cis-dihydroxy-2-cyclopenten-1-yl)amino)methyl)-7-deazaguanosine).</text>
</comment>
<comment type="catalytic activity">
    <reaction evidence="1">
        <text>7-aminomethyl-7-carbaguanine + guanosine(34) in tRNA = 7-aminomethyl-7-carbaguanosine(34) in tRNA + guanine</text>
        <dbReference type="Rhea" id="RHEA:24104"/>
        <dbReference type="Rhea" id="RHEA-COMP:10341"/>
        <dbReference type="Rhea" id="RHEA-COMP:10342"/>
        <dbReference type="ChEBI" id="CHEBI:16235"/>
        <dbReference type="ChEBI" id="CHEBI:58703"/>
        <dbReference type="ChEBI" id="CHEBI:74269"/>
        <dbReference type="ChEBI" id="CHEBI:82833"/>
        <dbReference type="EC" id="2.4.2.29"/>
    </reaction>
</comment>
<comment type="cofactor">
    <cofactor evidence="1">
        <name>Zn(2+)</name>
        <dbReference type="ChEBI" id="CHEBI:29105"/>
    </cofactor>
    <text evidence="1">Binds 1 zinc ion per subunit.</text>
</comment>
<comment type="pathway">
    <text evidence="1">tRNA modification; tRNA-queuosine biosynthesis.</text>
</comment>
<comment type="subunit">
    <text evidence="1">Homodimer. Within each dimer, one monomer is responsible for RNA recognition and catalysis, while the other monomer binds to the replacement base PreQ1.</text>
</comment>
<comment type="similarity">
    <text evidence="1">Belongs to the queuine tRNA-ribosyltransferase family.</text>
</comment>
<feature type="chain" id="PRO_1000097542" description="Queuine tRNA-ribosyltransferase">
    <location>
        <begin position="1"/>
        <end position="375"/>
    </location>
</feature>
<feature type="region of interest" description="RNA binding" evidence="1">
    <location>
        <begin position="245"/>
        <end position="251"/>
    </location>
</feature>
<feature type="region of interest" description="RNA binding; important for wobble base 34 recognition" evidence="1">
    <location>
        <begin position="269"/>
        <end position="273"/>
    </location>
</feature>
<feature type="active site" description="Proton acceptor" evidence="1">
    <location>
        <position position="89"/>
    </location>
</feature>
<feature type="active site" description="Nucleophile" evidence="1">
    <location>
        <position position="264"/>
    </location>
</feature>
<feature type="binding site" evidence="1">
    <location>
        <begin position="89"/>
        <end position="93"/>
    </location>
    <ligand>
        <name>substrate</name>
    </ligand>
</feature>
<feature type="binding site" evidence="1">
    <location>
        <position position="143"/>
    </location>
    <ligand>
        <name>substrate</name>
    </ligand>
</feature>
<feature type="binding site" evidence="1">
    <location>
        <position position="187"/>
    </location>
    <ligand>
        <name>substrate</name>
    </ligand>
</feature>
<feature type="binding site" evidence="1">
    <location>
        <position position="214"/>
    </location>
    <ligand>
        <name>substrate</name>
    </ligand>
</feature>
<feature type="binding site" evidence="1">
    <location>
        <position position="302"/>
    </location>
    <ligand>
        <name>Zn(2+)</name>
        <dbReference type="ChEBI" id="CHEBI:29105"/>
    </ligand>
</feature>
<feature type="binding site" evidence="1">
    <location>
        <position position="304"/>
    </location>
    <ligand>
        <name>Zn(2+)</name>
        <dbReference type="ChEBI" id="CHEBI:29105"/>
    </ligand>
</feature>
<feature type="binding site" evidence="1">
    <location>
        <position position="307"/>
    </location>
    <ligand>
        <name>Zn(2+)</name>
        <dbReference type="ChEBI" id="CHEBI:29105"/>
    </ligand>
</feature>
<feature type="binding site" evidence="1">
    <location>
        <position position="333"/>
    </location>
    <ligand>
        <name>Zn(2+)</name>
        <dbReference type="ChEBI" id="CHEBI:29105"/>
    </ligand>
</feature>
<accession>B1XEZ4</accession>
<protein>
    <recommendedName>
        <fullName evidence="1">Queuine tRNA-ribosyltransferase</fullName>
        <ecNumber evidence="1">2.4.2.29</ecNumber>
    </recommendedName>
    <alternativeName>
        <fullName evidence="1">Guanine insertion enzyme</fullName>
    </alternativeName>
    <alternativeName>
        <fullName evidence="1">tRNA-guanine transglycosylase</fullName>
    </alternativeName>
</protein>
<organism>
    <name type="scientific">Escherichia coli (strain K12 / DH10B)</name>
    <dbReference type="NCBI Taxonomy" id="316385"/>
    <lineage>
        <taxon>Bacteria</taxon>
        <taxon>Pseudomonadati</taxon>
        <taxon>Pseudomonadota</taxon>
        <taxon>Gammaproteobacteria</taxon>
        <taxon>Enterobacterales</taxon>
        <taxon>Enterobacteriaceae</taxon>
        <taxon>Escherichia</taxon>
    </lineage>
</organism>
<reference key="1">
    <citation type="journal article" date="2008" name="J. Bacteriol.">
        <title>The complete genome sequence of Escherichia coli DH10B: insights into the biology of a laboratory workhorse.</title>
        <authorList>
            <person name="Durfee T."/>
            <person name="Nelson R."/>
            <person name="Baldwin S."/>
            <person name="Plunkett G. III"/>
            <person name="Burland V."/>
            <person name="Mau B."/>
            <person name="Petrosino J.F."/>
            <person name="Qin X."/>
            <person name="Muzny D.M."/>
            <person name="Ayele M."/>
            <person name="Gibbs R.A."/>
            <person name="Csorgo B."/>
            <person name="Posfai G."/>
            <person name="Weinstock G.M."/>
            <person name="Blattner F.R."/>
        </authorList>
    </citation>
    <scope>NUCLEOTIDE SEQUENCE [LARGE SCALE GENOMIC DNA]</scope>
    <source>
        <strain>K12 / DH10B</strain>
    </source>
</reference>
<proteinExistence type="inferred from homology"/>
<name>TGT_ECODH</name>
<evidence type="ECO:0000255" key="1">
    <source>
        <dbReference type="HAMAP-Rule" id="MF_00168"/>
    </source>
</evidence>
<dbReference type="EC" id="2.4.2.29" evidence="1"/>
<dbReference type="EMBL" id="CP000948">
    <property type="protein sequence ID" value="ACB01534.1"/>
    <property type="molecule type" value="Genomic_DNA"/>
</dbReference>
<dbReference type="RefSeq" id="WP_000667319.1">
    <property type="nucleotide sequence ID" value="NC_010473.1"/>
</dbReference>
<dbReference type="SMR" id="B1XEZ4"/>
<dbReference type="GeneID" id="93777054"/>
<dbReference type="KEGG" id="ecd:ECDH10B_0362"/>
<dbReference type="HOGENOM" id="CLU_022060_0_1_6"/>
<dbReference type="UniPathway" id="UPA00392"/>
<dbReference type="GO" id="GO:0005829">
    <property type="term" value="C:cytosol"/>
    <property type="evidence" value="ECO:0007669"/>
    <property type="project" value="TreeGrafter"/>
</dbReference>
<dbReference type="GO" id="GO:0046872">
    <property type="term" value="F:metal ion binding"/>
    <property type="evidence" value="ECO:0007669"/>
    <property type="project" value="UniProtKB-KW"/>
</dbReference>
<dbReference type="GO" id="GO:0008479">
    <property type="term" value="F:tRNA-guanosine(34) queuine transglycosylase activity"/>
    <property type="evidence" value="ECO:0007669"/>
    <property type="project" value="UniProtKB-UniRule"/>
</dbReference>
<dbReference type="GO" id="GO:0008616">
    <property type="term" value="P:queuosine biosynthetic process"/>
    <property type="evidence" value="ECO:0007669"/>
    <property type="project" value="UniProtKB-UniRule"/>
</dbReference>
<dbReference type="GO" id="GO:0002099">
    <property type="term" value="P:tRNA wobble guanine modification"/>
    <property type="evidence" value="ECO:0007669"/>
    <property type="project" value="TreeGrafter"/>
</dbReference>
<dbReference type="GO" id="GO:0101030">
    <property type="term" value="P:tRNA-guanine transglycosylation"/>
    <property type="evidence" value="ECO:0007669"/>
    <property type="project" value="InterPro"/>
</dbReference>
<dbReference type="FunFam" id="3.20.20.105:FF:000001">
    <property type="entry name" value="Queuine tRNA-ribosyltransferase"/>
    <property type="match status" value="1"/>
</dbReference>
<dbReference type="Gene3D" id="3.20.20.105">
    <property type="entry name" value="Queuine tRNA-ribosyltransferase-like"/>
    <property type="match status" value="1"/>
</dbReference>
<dbReference type="HAMAP" id="MF_00168">
    <property type="entry name" value="Q_tRNA_Tgt"/>
    <property type="match status" value="1"/>
</dbReference>
<dbReference type="InterPro" id="IPR050076">
    <property type="entry name" value="ArchSynthase1/Queuine_TRR"/>
</dbReference>
<dbReference type="InterPro" id="IPR004803">
    <property type="entry name" value="TGT"/>
</dbReference>
<dbReference type="InterPro" id="IPR036511">
    <property type="entry name" value="TGT-like_sf"/>
</dbReference>
<dbReference type="InterPro" id="IPR002616">
    <property type="entry name" value="tRNA_ribo_trans-like"/>
</dbReference>
<dbReference type="NCBIfam" id="TIGR00430">
    <property type="entry name" value="Q_tRNA_tgt"/>
    <property type="match status" value="1"/>
</dbReference>
<dbReference type="NCBIfam" id="TIGR00449">
    <property type="entry name" value="tgt_general"/>
    <property type="match status" value="1"/>
</dbReference>
<dbReference type="PANTHER" id="PTHR46499">
    <property type="entry name" value="QUEUINE TRNA-RIBOSYLTRANSFERASE"/>
    <property type="match status" value="1"/>
</dbReference>
<dbReference type="PANTHER" id="PTHR46499:SF1">
    <property type="entry name" value="QUEUINE TRNA-RIBOSYLTRANSFERASE"/>
    <property type="match status" value="1"/>
</dbReference>
<dbReference type="Pfam" id="PF01702">
    <property type="entry name" value="TGT"/>
    <property type="match status" value="1"/>
</dbReference>
<dbReference type="SUPFAM" id="SSF51713">
    <property type="entry name" value="tRNA-guanine transglycosylase"/>
    <property type="match status" value="1"/>
</dbReference>